<proteinExistence type="inferred from homology"/>
<name>RL6_MYCBO</name>
<dbReference type="EMBL" id="LT708304">
    <property type="protein sequence ID" value="SIT99339.1"/>
    <property type="molecule type" value="Genomic_DNA"/>
</dbReference>
<dbReference type="RefSeq" id="NP_854398.1">
    <property type="nucleotide sequence ID" value="NC_002945.3"/>
</dbReference>
<dbReference type="RefSeq" id="WP_003403673.1">
    <property type="nucleotide sequence ID" value="NC_002945.4"/>
</dbReference>
<dbReference type="SMR" id="P66312"/>
<dbReference type="GeneID" id="45424684"/>
<dbReference type="KEGG" id="mbo:BQ2027_MB0740"/>
<dbReference type="PATRIC" id="fig|233413.5.peg.807"/>
<dbReference type="Proteomes" id="UP000001419">
    <property type="component" value="Chromosome"/>
</dbReference>
<dbReference type="GO" id="GO:0022625">
    <property type="term" value="C:cytosolic large ribosomal subunit"/>
    <property type="evidence" value="ECO:0007669"/>
    <property type="project" value="TreeGrafter"/>
</dbReference>
<dbReference type="GO" id="GO:0019843">
    <property type="term" value="F:rRNA binding"/>
    <property type="evidence" value="ECO:0007669"/>
    <property type="project" value="UniProtKB-UniRule"/>
</dbReference>
<dbReference type="GO" id="GO:0003735">
    <property type="term" value="F:structural constituent of ribosome"/>
    <property type="evidence" value="ECO:0007669"/>
    <property type="project" value="InterPro"/>
</dbReference>
<dbReference type="GO" id="GO:0002181">
    <property type="term" value="P:cytoplasmic translation"/>
    <property type="evidence" value="ECO:0007669"/>
    <property type="project" value="TreeGrafter"/>
</dbReference>
<dbReference type="FunFam" id="3.90.930.12:FF:000001">
    <property type="entry name" value="50S ribosomal protein L6"/>
    <property type="match status" value="1"/>
</dbReference>
<dbReference type="FunFam" id="3.90.930.12:FF:000002">
    <property type="entry name" value="50S ribosomal protein L6"/>
    <property type="match status" value="1"/>
</dbReference>
<dbReference type="Gene3D" id="3.90.930.12">
    <property type="entry name" value="Ribosomal protein L6, alpha-beta domain"/>
    <property type="match status" value="2"/>
</dbReference>
<dbReference type="HAMAP" id="MF_01365_B">
    <property type="entry name" value="Ribosomal_uL6_B"/>
    <property type="match status" value="1"/>
</dbReference>
<dbReference type="InterPro" id="IPR000702">
    <property type="entry name" value="Ribosomal_uL6-like"/>
</dbReference>
<dbReference type="InterPro" id="IPR036789">
    <property type="entry name" value="Ribosomal_uL6-like_a/b-dom_sf"/>
</dbReference>
<dbReference type="InterPro" id="IPR020040">
    <property type="entry name" value="Ribosomal_uL6_a/b-dom"/>
</dbReference>
<dbReference type="InterPro" id="IPR019906">
    <property type="entry name" value="Ribosomal_uL6_bac-type"/>
</dbReference>
<dbReference type="InterPro" id="IPR002358">
    <property type="entry name" value="Ribosomal_uL6_CS"/>
</dbReference>
<dbReference type="NCBIfam" id="TIGR03654">
    <property type="entry name" value="L6_bact"/>
    <property type="match status" value="1"/>
</dbReference>
<dbReference type="PANTHER" id="PTHR11655">
    <property type="entry name" value="60S/50S RIBOSOMAL PROTEIN L6/L9"/>
    <property type="match status" value="1"/>
</dbReference>
<dbReference type="PANTHER" id="PTHR11655:SF14">
    <property type="entry name" value="LARGE RIBOSOMAL SUBUNIT PROTEIN UL6M"/>
    <property type="match status" value="1"/>
</dbReference>
<dbReference type="Pfam" id="PF00347">
    <property type="entry name" value="Ribosomal_L6"/>
    <property type="match status" value="2"/>
</dbReference>
<dbReference type="PIRSF" id="PIRSF002162">
    <property type="entry name" value="Ribosomal_L6"/>
    <property type="match status" value="1"/>
</dbReference>
<dbReference type="PRINTS" id="PR00059">
    <property type="entry name" value="RIBOSOMALL6"/>
</dbReference>
<dbReference type="SUPFAM" id="SSF56053">
    <property type="entry name" value="Ribosomal protein L6"/>
    <property type="match status" value="2"/>
</dbReference>
<dbReference type="PROSITE" id="PS00525">
    <property type="entry name" value="RIBOSOMAL_L6_1"/>
    <property type="match status" value="1"/>
</dbReference>
<accession>P66312</accession>
<accession>A0A1R3XW69</accession>
<accession>P95067</accession>
<accession>X2BFZ9</accession>
<feature type="chain" id="PRO_0000131063" description="Large ribosomal subunit protein uL6">
    <location>
        <begin position="1"/>
        <end position="179"/>
    </location>
</feature>
<keyword id="KW-1185">Reference proteome</keyword>
<keyword id="KW-0687">Ribonucleoprotein</keyword>
<keyword id="KW-0689">Ribosomal protein</keyword>
<keyword id="KW-0694">RNA-binding</keyword>
<keyword id="KW-0699">rRNA-binding</keyword>
<evidence type="ECO:0000255" key="1">
    <source>
        <dbReference type="HAMAP-Rule" id="MF_01365"/>
    </source>
</evidence>
<evidence type="ECO:0000305" key="2"/>
<organism>
    <name type="scientific">Mycobacterium bovis (strain ATCC BAA-935 / AF2122/97)</name>
    <dbReference type="NCBI Taxonomy" id="233413"/>
    <lineage>
        <taxon>Bacteria</taxon>
        <taxon>Bacillati</taxon>
        <taxon>Actinomycetota</taxon>
        <taxon>Actinomycetes</taxon>
        <taxon>Mycobacteriales</taxon>
        <taxon>Mycobacteriaceae</taxon>
        <taxon>Mycobacterium</taxon>
        <taxon>Mycobacterium tuberculosis complex</taxon>
    </lineage>
</organism>
<gene>
    <name evidence="1" type="primary">rplF</name>
    <name type="ordered locus">BQ2027_MB0740</name>
</gene>
<protein>
    <recommendedName>
        <fullName evidence="1">Large ribosomal subunit protein uL6</fullName>
    </recommendedName>
    <alternativeName>
        <fullName evidence="2">50S ribosomal protein L6</fullName>
    </alternativeName>
</protein>
<comment type="function">
    <text evidence="1">This protein binds to the 23S rRNA, and is important in its secondary structure. It is located near the subunit interface in the base of the L7/L12 stalk, and near the tRNA binding site of the peptidyltransferase center.</text>
</comment>
<comment type="subunit">
    <text evidence="1">Part of the 50S ribosomal subunit.</text>
</comment>
<comment type="similarity">
    <text evidence="1">Belongs to the universal ribosomal protein uL6 family.</text>
</comment>
<sequence>MSRIGKQPIPVPAGVDVTIEGQSISVKGPKGTLGLTVAEPIKVARNDDGAIVVTRPDDERRNRSLHGLSRTLVSNLVTGVTQGYTTKMEIFGVGYRVQLKGSNLEFALGYSHPVVIEAPEGITFAVQAPTKFTVSGIDKQKVGQIAANIRRLRRPDPYKGKGVRYEGEQIRRKVGKTGK</sequence>
<reference key="1">
    <citation type="journal article" date="2003" name="Proc. Natl. Acad. Sci. U.S.A.">
        <title>The complete genome sequence of Mycobacterium bovis.</title>
        <authorList>
            <person name="Garnier T."/>
            <person name="Eiglmeier K."/>
            <person name="Camus J.-C."/>
            <person name="Medina N."/>
            <person name="Mansoor H."/>
            <person name="Pryor M."/>
            <person name="Duthoy S."/>
            <person name="Grondin S."/>
            <person name="Lacroix C."/>
            <person name="Monsempe C."/>
            <person name="Simon S."/>
            <person name="Harris B."/>
            <person name="Atkin R."/>
            <person name="Doggett J."/>
            <person name="Mayes R."/>
            <person name="Keating L."/>
            <person name="Wheeler P.R."/>
            <person name="Parkhill J."/>
            <person name="Barrell B.G."/>
            <person name="Cole S.T."/>
            <person name="Gordon S.V."/>
            <person name="Hewinson R.G."/>
        </authorList>
    </citation>
    <scope>NUCLEOTIDE SEQUENCE [LARGE SCALE GENOMIC DNA]</scope>
    <source>
        <strain>ATCC BAA-935 / AF2122/97</strain>
    </source>
</reference>
<reference key="2">
    <citation type="journal article" date="2017" name="Genome Announc.">
        <title>Updated reference genome sequence and annotation of Mycobacterium bovis AF2122/97.</title>
        <authorList>
            <person name="Malone K.M."/>
            <person name="Farrell D."/>
            <person name="Stuber T.P."/>
            <person name="Schubert O.T."/>
            <person name="Aebersold R."/>
            <person name="Robbe-Austerman S."/>
            <person name="Gordon S.V."/>
        </authorList>
    </citation>
    <scope>NUCLEOTIDE SEQUENCE [LARGE SCALE GENOMIC DNA]</scope>
    <scope>GENOME REANNOTATION</scope>
    <source>
        <strain>ATCC BAA-935 / AF2122/97</strain>
    </source>
</reference>